<gene>
    <name type="ordered locus">YCR102C</name>
</gene>
<reference key="1">
    <citation type="journal article" date="1992" name="Nature">
        <title>The complete DNA sequence of yeast chromosome III.</title>
        <authorList>
            <person name="Oliver S.G."/>
            <person name="van der Aart Q.J.M."/>
            <person name="Agostoni-Carbone M.L."/>
            <person name="Aigle M."/>
            <person name="Alberghina L."/>
            <person name="Alexandraki D."/>
            <person name="Antoine G."/>
            <person name="Anwar R."/>
            <person name="Ballesta J.P.G."/>
            <person name="Benit P."/>
            <person name="Berben G."/>
            <person name="Bergantino E."/>
            <person name="Biteau N."/>
            <person name="Bolle P.-A."/>
            <person name="Bolotin-Fukuhara M."/>
            <person name="Brown A."/>
            <person name="Brown A.J.P."/>
            <person name="Buhler J.-M."/>
            <person name="Carcano C."/>
            <person name="Carignani G."/>
            <person name="Cederberg H."/>
            <person name="Chanet R."/>
            <person name="Contreras R."/>
            <person name="Crouzet M."/>
            <person name="Daignan-Fornier B."/>
            <person name="Defoor E."/>
            <person name="Delgado M.D."/>
            <person name="Demolder J."/>
            <person name="Doira C."/>
            <person name="Dubois E."/>
            <person name="Dujon B."/>
            <person name="Duesterhoeft A."/>
            <person name="Erdmann D."/>
            <person name="Esteban M."/>
            <person name="Fabre F."/>
            <person name="Fairhead C."/>
            <person name="Faye G."/>
            <person name="Feldmann H."/>
            <person name="Fiers W."/>
            <person name="Francingues-Gaillard M.-C."/>
            <person name="Franco L."/>
            <person name="Frontali L."/>
            <person name="Fukuhara H."/>
            <person name="Fuller L.J."/>
            <person name="Galland P."/>
            <person name="Gent M.E."/>
            <person name="Gigot D."/>
            <person name="Gilliquet V."/>
            <person name="Glansdorff N."/>
            <person name="Goffeau A."/>
            <person name="Grenson M."/>
            <person name="Grisanti P."/>
            <person name="Grivell L.A."/>
            <person name="de Haan M."/>
            <person name="Haasemann M."/>
            <person name="Hatat D."/>
            <person name="Hoenicka J."/>
            <person name="Hegemann J.H."/>
            <person name="Herbert C.J."/>
            <person name="Hilger F."/>
            <person name="Hohmann S."/>
            <person name="Hollenberg C.P."/>
            <person name="Huse K."/>
            <person name="Iborra F."/>
            <person name="Indge K.J."/>
            <person name="Isono K."/>
            <person name="Jacq C."/>
            <person name="Jacquet M."/>
            <person name="James C.M."/>
            <person name="Jauniaux J.-C."/>
            <person name="Jia Y."/>
            <person name="Jimenez A."/>
            <person name="Kelly A."/>
            <person name="Kleinhans U."/>
            <person name="Kreisl P."/>
            <person name="Lanfranchi G."/>
            <person name="Lewis C."/>
            <person name="van der Linden C.G."/>
            <person name="Lucchini G."/>
            <person name="Lutzenkirchen K."/>
            <person name="Maat M.J."/>
            <person name="Mallet L."/>
            <person name="Mannhaupt G."/>
            <person name="Martegani E."/>
            <person name="Mathieu A."/>
            <person name="Maurer C.T.C."/>
            <person name="McConnell D."/>
            <person name="McKee R.A."/>
            <person name="Messenguy F."/>
            <person name="Mewes H.-W."/>
            <person name="Molemans F."/>
            <person name="Montague M.A."/>
            <person name="Muzi Falconi M."/>
            <person name="Navas L."/>
            <person name="Newlon C.S."/>
            <person name="Noone D."/>
            <person name="Pallier C."/>
            <person name="Panzeri L."/>
            <person name="Pearson B.M."/>
            <person name="Perea J."/>
            <person name="Philippsen P."/>
            <person name="Pierard A."/>
            <person name="Planta R.J."/>
            <person name="Plevani P."/>
            <person name="Poetsch B."/>
            <person name="Pohl F.M."/>
            <person name="Purnelle B."/>
            <person name="Ramezani Rad M."/>
            <person name="Rasmussen S.W."/>
            <person name="Raynal A."/>
            <person name="Remacha M.A."/>
            <person name="Richterich P."/>
            <person name="Roberts A.B."/>
            <person name="Rodriguez F."/>
            <person name="Sanz E."/>
            <person name="Schaaff-Gerstenschlaeger I."/>
            <person name="Scherens B."/>
            <person name="Schweitzer B."/>
            <person name="Shu Y."/>
            <person name="Skala J."/>
            <person name="Slonimski P.P."/>
            <person name="Sor F."/>
            <person name="Soustelle C."/>
            <person name="Spiegelberg R."/>
            <person name="Stateva L.I."/>
            <person name="Steensma H.Y."/>
            <person name="Steiner S."/>
            <person name="Thierry A."/>
            <person name="Thireos G."/>
            <person name="Tzermia M."/>
            <person name="Urrestarazu L.A."/>
            <person name="Valle G."/>
            <person name="Vetter I."/>
            <person name="van Vliet-Reedijk J.C."/>
            <person name="Voet M."/>
            <person name="Volckaert G."/>
            <person name="Vreken P."/>
            <person name="Wang H."/>
            <person name="Warmington J.R."/>
            <person name="von Wettstein D."/>
            <person name="Wicksteed B.L."/>
            <person name="Wilson C."/>
            <person name="Wurst H."/>
            <person name="Xu G."/>
            <person name="Yoshikawa A."/>
            <person name="Zimmermann F.K."/>
            <person name="Sgouros J.G."/>
        </authorList>
    </citation>
    <scope>NUCLEOTIDE SEQUENCE [LARGE SCALE GENOMIC DNA]</scope>
    <source>
        <strain>ATCC 204508 / S288c</strain>
    </source>
</reference>
<reference key="2">
    <citation type="journal article" date="2014" name="G3 (Bethesda)">
        <title>The reference genome sequence of Saccharomyces cerevisiae: Then and now.</title>
        <authorList>
            <person name="Engel S.R."/>
            <person name="Dietrich F.S."/>
            <person name="Fisk D.G."/>
            <person name="Binkley G."/>
            <person name="Balakrishnan R."/>
            <person name="Costanzo M.C."/>
            <person name="Dwight S.S."/>
            <person name="Hitz B.C."/>
            <person name="Karra K."/>
            <person name="Nash R.S."/>
            <person name="Weng S."/>
            <person name="Wong E.D."/>
            <person name="Lloyd P."/>
            <person name="Skrzypek M.S."/>
            <person name="Miyasato S.R."/>
            <person name="Simison M."/>
            <person name="Cherry J.M."/>
        </authorList>
    </citation>
    <scope>GENOME REANNOTATION</scope>
    <source>
        <strain>ATCC 204508 / S288c</strain>
    </source>
</reference>
<comment type="similarity">
    <text evidence="1">Belongs to the YCR102c/YLR460c/YNL134c family.</text>
</comment>
<accession>P25608</accession>
<accession>D6VRA3</accession>
<sequence>MKAVVIEDGKAVVKEGVPIPELEEGFVLIKTLAVAGNPTDWAHIDYKVGPQGSILGCDAAGQIVKLGPAVDPKDFSIGDYIYGFIHGSSVRFPSNGAFAEYSAISTVVAYKSPNELKFLGEDVLPAGPVRSLEGAATIPVSLTTAGLVLTYNLGLNLKWEPSTPQRNGPILLWGGATAVGQSLIQLANKLNGFTKIIVVASRKHEKLLKEYGADQLFDYHDIDVVEQIKHKYNNISYLVDCVANQNTLQQVYKCAADKQDATVVELTNLTEENVKKENRRQNVTIDRTRLYSIGGHEVPFGGITFPADPEARRAATEFVKFINPKISDGQIHHIPARVYKNGLYDVPRILEDIKIGKNSGEKLVAVLN</sequence>
<feature type="chain" id="PRO_0000202585" description="Uncharacterized protein YCR102C">
    <location>
        <begin position="1"/>
        <end position="368"/>
    </location>
</feature>
<dbReference type="EMBL" id="X59720">
    <property type="protein sequence ID" value="CAA42244.1"/>
    <property type="molecule type" value="Genomic_DNA"/>
</dbReference>
<dbReference type="EMBL" id="BK006937">
    <property type="protein sequence ID" value="DAA07572.1"/>
    <property type="molecule type" value="Genomic_DNA"/>
</dbReference>
<dbReference type="PIR" id="S19414">
    <property type="entry name" value="S19414"/>
</dbReference>
<dbReference type="RefSeq" id="NP_010026.1">
    <property type="nucleotide sequence ID" value="NM_001178809.1"/>
</dbReference>
<dbReference type="SMR" id="P25608"/>
<dbReference type="BioGRID" id="31075">
    <property type="interactions" value="190"/>
</dbReference>
<dbReference type="FunCoup" id="P25608">
    <property type="interactions" value="100"/>
</dbReference>
<dbReference type="MINT" id="P25608"/>
<dbReference type="STRING" id="4932.YCR102C"/>
<dbReference type="PaxDb" id="4932-YCR102C"/>
<dbReference type="PeptideAtlas" id="P25608"/>
<dbReference type="EnsemblFungi" id="YCR102C_mRNA">
    <property type="protein sequence ID" value="YCR102C"/>
    <property type="gene ID" value="YCR102C"/>
</dbReference>
<dbReference type="GeneID" id="850466"/>
<dbReference type="KEGG" id="sce:YCR102C"/>
<dbReference type="AGR" id="SGD:S000000699"/>
<dbReference type="SGD" id="S000000699">
    <property type="gene designation" value="YCR102C"/>
</dbReference>
<dbReference type="VEuPathDB" id="FungiDB:YCR102C"/>
<dbReference type="eggNOG" id="KOG1198">
    <property type="taxonomic scope" value="Eukaryota"/>
</dbReference>
<dbReference type="GeneTree" id="ENSGT00940000176384"/>
<dbReference type="HOGENOM" id="CLU_026673_16_1_1"/>
<dbReference type="InParanoid" id="P25608"/>
<dbReference type="OMA" id="YDYKDAQ"/>
<dbReference type="OrthoDB" id="9992527at2759"/>
<dbReference type="BioCyc" id="YEAST:G3O-29396-MONOMER"/>
<dbReference type="BioGRID-ORCS" id="850466">
    <property type="hits" value="0 hits in 10 CRISPR screens"/>
</dbReference>
<dbReference type="PRO" id="PR:P25608"/>
<dbReference type="Proteomes" id="UP000002311">
    <property type="component" value="Chromosome III"/>
</dbReference>
<dbReference type="RNAct" id="P25608">
    <property type="molecule type" value="protein"/>
</dbReference>
<dbReference type="GO" id="GO:0016651">
    <property type="term" value="F:oxidoreductase activity, acting on NAD(P)H"/>
    <property type="evidence" value="ECO:0007669"/>
    <property type="project" value="InterPro"/>
</dbReference>
<dbReference type="GO" id="GO:0071468">
    <property type="term" value="P:cellular response to acidic pH"/>
    <property type="evidence" value="ECO:0000314"/>
    <property type="project" value="SGD"/>
</dbReference>
<dbReference type="GO" id="GO:0046688">
    <property type="term" value="P:response to copper ion"/>
    <property type="evidence" value="ECO:0000315"/>
    <property type="project" value="SGD"/>
</dbReference>
<dbReference type="CDD" id="cd08249">
    <property type="entry name" value="enoyl_reductase_like"/>
    <property type="match status" value="1"/>
</dbReference>
<dbReference type="FunFam" id="3.40.50.720:FF:000472">
    <property type="entry name" value="Conserved protein"/>
    <property type="match status" value="1"/>
</dbReference>
<dbReference type="Gene3D" id="3.90.180.10">
    <property type="entry name" value="Medium-chain alcohol dehydrogenases, catalytic domain"/>
    <property type="match status" value="1"/>
</dbReference>
<dbReference type="Gene3D" id="3.40.50.720">
    <property type="entry name" value="NAD(P)-binding Rossmann-like Domain"/>
    <property type="match status" value="1"/>
</dbReference>
<dbReference type="InterPro" id="IPR013149">
    <property type="entry name" value="ADH-like_C"/>
</dbReference>
<dbReference type="InterPro" id="IPR013154">
    <property type="entry name" value="ADH-like_N"/>
</dbReference>
<dbReference type="InterPro" id="IPR011032">
    <property type="entry name" value="GroES-like_sf"/>
</dbReference>
<dbReference type="InterPro" id="IPR036291">
    <property type="entry name" value="NAD(P)-bd_dom_sf"/>
</dbReference>
<dbReference type="InterPro" id="IPR020843">
    <property type="entry name" value="PKS_ER"/>
</dbReference>
<dbReference type="InterPro" id="IPR047122">
    <property type="entry name" value="Trans-enoyl_RdTase-like"/>
</dbReference>
<dbReference type="PANTHER" id="PTHR45348">
    <property type="entry name" value="HYPOTHETICAL OXIDOREDUCTASE (EUROFUNG)"/>
    <property type="match status" value="1"/>
</dbReference>
<dbReference type="PANTHER" id="PTHR45348:SF2">
    <property type="entry name" value="ZINC-TYPE ALCOHOL DEHYDROGENASE-LIKE PROTEIN C2E1P3.01"/>
    <property type="match status" value="1"/>
</dbReference>
<dbReference type="Pfam" id="PF08240">
    <property type="entry name" value="ADH_N"/>
    <property type="match status" value="1"/>
</dbReference>
<dbReference type="Pfam" id="PF00107">
    <property type="entry name" value="ADH_zinc_N"/>
    <property type="match status" value="1"/>
</dbReference>
<dbReference type="SMART" id="SM00829">
    <property type="entry name" value="PKS_ER"/>
    <property type="match status" value="1"/>
</dbReference>
<dbReference type="SUPFAM" id="SSF50129">
    <property type="entry name" value="GroES-like"/>
    <property type="match status" value="1"/>
</dbReference>
<dbReference type="SUPFAM" id="SSF51735">
    <property type="entry name" value="NAD(P)-binding Rossmann-fold domains"/>
    <property type="match status" value="1"/>
</dbReference>
<evidence type="ECO:0000305" key="1"/>
<keyword id="KW-1185">Reference proteome</keyword>
<name>YCZ2_YEAST</name>
<proteinExistence type="inferred from homology"/>
<protein>
    <recommendedName>
        <fullName>Uncharacterized protein YCR102C</fullName>
    </recommendedName>
</protein>
<organism>
    <name type="scientific">Saccharomyces cerevisiae (strain ATCC 204508 / S288c)</name>
    <name type="common">Baker's yeast</name>
    <dbReference type="NCBI Taxonomy" id="559292"/>
    <lineage>
        <taxon>Eukaryota</taxon>
        <taxon>Fungi</taxon>
        <taxon>Dikarya</taxon>
        <taxon>Ascomycota</taxon>
        <taxon>Saccharomycotina</taxon>
        <taxon>Saccharomycetes</taxon>
        <taxon>Saccharomycetales</taxon>
        <taxon>Saccharomycetaceae</taxon>
        <taxon>Saccharomyces</taxon>
    </lineage>
</organism>